<accession>Q6AYA8</accession>
<accession>A6JDI0</accession>
<keyword id="KW-1003">Cell membrane</keyword>
<keyword id="KW-0472">Membrane</keyword>
<keyword id="KW-0597">Phosphoprotein</keyword>
<keyword id="KW-1185">Reference proteome</keyword>
<keyword id="KW-0043">Tumor suppressor</keyword>
<proteinExistence type="evidence at transcript level"/>
<dbReference type="EMBL" id="BC079124">
    <property type="protein sequence ID" value="AAH79124.1"/>
    <property type="molecule type" value="mRNA"/>
</dbReference>
<dbReference type="EMBL" id="AABR07015029">
    <property type="status" value="NOT_ANNOTATED_CDS"/>
    <property type="molecule type" value="Genomic_DNA"/>
</dbReference>
<dbReference type="EMBL" id="CH473981">
    <property type="protein sequence ID" value="EDL90100.1"/>
    <property type="molecule type" value="Genomic_DNA"/>
</dbReference>
<dbReference type="EMBL" id="CH473981">
    <property type="protein sequence ID" value="EDL90101.1"/>
    <property type="molecule type" value="Genomic_DNA"/>
</dbReference>
<dbReference type="RefSeq" id="NP_001017500.1">
    <property type="nucleotide sequence ID" value="NM_001017500.1"/>
</dbReference>
<dbReference type="FunCoup" id="Q6AYA8">
    <property type="interactions" value="115"/>
</dbReference>
<dbReference type="STRING" id="10116.ENSRNOP00000002982"/>
<dbReference type="GlyGen" id="Q6AYA8">
    <property type="glycosylation" value="2 sites"/>
</dbReference>
<dbReference type="PhosphoSitePlus" id="Q6AYA8"/>
<dbReference type="PaxDb" id="10116-ENSRNOP00000002982"/>
<dbReference type="Ensembl" id="ENSRNOT00000002982.6">
    <property type="protein sequence ID" value="ENSRNOP00000002982.4"/>
    <property type="gene ID" value="ENSRNOG00000002191.6"/>
</dbReference>
<dbReference type="Ensembl" id="ENSRNOT00055030239">
    <property type="protein sequence ID" value="ENSRNOP00055024308"/>
    <property type="gene ID" value="ENSRNOG00055017870"/>
</dbReference>
<dbReference type="Ensembl" id="ENSRNOT00060026831">
    <property type="protein sequence ID" value="ENSRNOP00060021506"/>
    <property type="gene ID" value="ENSRNOG00060015662"/>
</dbReference>
<dbReference type="Ensembl" id="ENSRNOT00065023286">
    <property type="protein sequence ID" value="ENSRNOP00065018123"/>
    <property type="gene ID" value="ENSRNOG00065014106"/>
</dbReference>
<dbReference type="GeneID" id="498368"/>
<dbReference type="KEGG" id="rno:498368"/>
<dbReference type="UCSC" id="RGD:1561612">
    <property type="organism name" value="rat"/>
</dbReference>
<dbReference type="AGR" id="RGD:1561612"/>
<dbReference type="CTD" id="55286"/>
<dbReference type="RGD" id="1561612">
    <property type="gene designation" value="Pgcka1"/>
</dbReference>
<dbReference type="eggNOG" id="ENOG502S5D9">
    <property type="taxonomic scope" value="Eukaryota"/>
</dbReference>
<dbReference type="GeneTree" id="ENSGT00390000013778"/>
<dbReference type="HOGENOM" id="CLU_076375_0_0_1"/>
<dbReference type="InParanoid" id="Q6AYA8"/>
<dbReference type="OMA" id="YPQLWGS"/>
<dbReference type="OrthoDB" id="8773301at2759"/>
<dbReference type="PhylomeDB" id="Q6AYA8"/>
<dbReference type="TreeFam" id="TF337421"/>
<dbReference type="PRO" id="PR:Q6AYA8"/>
<dbReference type="Proteomes" id="UP000002494">
    <property type="component" value="Chromosome 14"/>
</dbReference>
<dbReference type="Proteomes" id="UP000234681">
    <property type="component" value="Chromosome 14"/>
</dbReference>
<dbReference type="Bgee" id="ENSRNOG00000002191">
    <property type="expression patterns" value="Expressed in stomach and 17 other cell types or tissues"/>
</dbReference>
<dbReference type="GO" id="GO:0071944">
    <property type="term" value="C:cell periphery"/>
    <property type="evidence" value="ECO:0000250"/>
    <property type="project" value="UniProtKB"/>
</dbReference>
<dbReference type="GO" id="GO:0005886">
    <property type="term" value="C:plasma membrane"/>
    <property type="evidence" value="ECO:0007669"/>
    <property type="project" value="UniProtKB-SubCell"/>
</dbReference>
<dbReference type="GO" id="GO:0003723">
    <property type="term" value="F:RNA binding"/>
    <property type="evidence" value="ECO:0000250"/>
    <property type="project" value="UniProtKB"/>
</dbReference>
<dbReference type="GO" id="GO:0051726">
    <property type="term" value="P:regulation of cell cycle"/>
    <property type="evidence" value="ECO:0007669"/>
    <property type="project" value="Ensembl"/>
</dbReference>
<dbReference type="InterPro" id="IPR031528">
    <property type="entry name" value="DUF4699"/>
</dbReference>
<dbReference type="PANTHER" id="PTHR16106">
    <property type="entry name" value="CHROMOSOME 4 OPEN READING FRAME 19"/>
    <property type="match status" value="1"/>
</dbReference>
<dbReference type="PANTHER" id="PTHR16106:SF3">
    <property type="entry name" value="CHROMOSOME 4 OPEN READING FRAME 19"/>
    <property type="match status" value="1"/>
</dbReference>
<dbReference type="Pfam" id="PF15770">
    <property type="entry name" value="DUF4699"/>
    <property type="match status" value="1"/>
</dbReference>
<reference key="1">
    <citation type="journal article" date="2004" name="Genome Res.">
        <title>The status, quality, and expansion of the NIH full-length cDNA project: the Mammalian Gene Collection (MGC).</title>
        <authorList>
            <consortium name="The MGC Project Team"/>
        </authorList>
    </citation>
    <scope>NUCLEOTIDE SEQUENCE [LARGE SCALE MRNA]</scope>
    <source>
        <tissue>Kidney</tissue>
    </source>
</reference>
<reference key="2">
    <citation type="journal article" date="2004" name="Nature">
        <title>Genome sequence of the Brown Norway rat yields insights into mammalian evolution.</title>
        <authorList>
            <person name="Gibbs R.A."/>
            <person name="Weinstock G.M."/>
            <person name="Metzker M.L."/>
            <person name="Muzny D.M."/>
            <person name="Sodergren E.J."/>
            <person name="Scherer S."/>
            <person name="Scott G."/>
            <person name="Steffen D."/>
            <person name="Worley K.C."/>
            <person name="Burch P.E."/>
            <person name="Okwuonu G."/>
            <person name="Hines S."/>
            <person name="Lewis L."/>
            <person name="Deramo C."/>
            <person name="Delgado O."/>
            <person name="Dugan-Rocha S."/>
            <person name="Miner G."/>
            <person name="Morgan M."/>
            <person name="Hawes A."/>
            <person name="Gill R."/>
            <person name="Holt R.A."/>
            <person name="Adams M.D."/>
            <person name="Amanatides P.G."/>
            <person name="Baden-Tillson H."/>
            <person name="Barnstead M."/>
            <person name="Chin S."/>
            <person name="Evans C.A."/>
            <person name="Ferriera S."/>
            <person name="Fosler C."/>
            <person name="Glodek A."/>
            <person name="Gu Z."/>
            <person name="Jennings D."/>
            <person name="Kraft C.L."/>
            <person name="Nguyen T."/>
            <person name="Pfannkoch C.M."/>
            <person name="Sitter C."/>
            <person name="Sutton G.G."/>
            <person name="Venter J.C."/>
            <person name="Woodage T."/>
            <person name="Smith D."/>
            <person name="Lee H.-M."/>
            <person name="Gustafson E."/>
            <person name="Cahill P."/>
            <person name="Kana A."/>
            <person name="Doucette-Stamm L."/>
            <person name="Weinstock K."/>
            <person name="Fechtel K."/>
            <person name="Weiss R.B."/>
            <person name="Dunn D.M."/>
            <person name="Green E.D."/>
            <person name="Blakesley R.W."/>
            <person name="Bouffard G.G."/>
            <person name="De Jong P.J."/>
            <person name="Osoegawa K."/>
            <person name="Zhu B."/>
            <person name="Marra M."/>
            <person name="Schein J."/>
            <person name="Bosdet I."/>
            <person name="Fjell C."/>
            <person name="Jones S."/>
            <person name="Krzywinski M."/>
            <person name="Mathewson C."/>
            <person name="Siddiqui A."/>
            <person name="Wye N."/>
            <person name="McPherson J."/>
            <person name="Zhao S."/>
            <person name="Fraser C.M."/>
            <person name="Shetty J."/>
            <person name="Shatsman S."/>
            <person name="Geer K."/>
            <person name="Chen Y."/>
            <person name="Abramzon S."/>
            <person name="Nierman W.C."/>
            <person name="Havlak P.H."/>
            <person name="Chen R."/>
            <person name="Durbin K.J."/>
            <person name="Egan A."/>
            <person name="Ren Y."/>
            <person name="Song X.-Z."/>
            <person name="Li B."/>
            <person name="Liu Y."/>
            <person name="Qin X."/>
            <person name="Cawley S."/>
            <person name="Cooney A.J."/>
            <person name="D'Souza L.M."/>
            <person name="Martin K."/>
            <person name="Wu J.Q."/>
            <person name="Gonzalez-Garay M.L."/>
            <person name="Jackson A.R."/>
            <person name="Kalafus K.J."/>
            <person name="McLeod M.P."/>
            <person name="Milosavljevic A."/>
            <person name="Virk D."/>
            <person name="Volkov A."/>
            <person name="Wheeler D.A."/>
            <person name="Zhang Z."/>
            <person name="Bailey J.A."/>
            <person name="Eichler E.E."/>
            <person name="Tuzun E."/>
            <person name="Birney E."/>
            <person name="Mongin E."/>
            <person name="Ureta-Vidal A."/>
            <person name="Woodwark C."/>
            <person name="Zdobnov E."/>
            <person name="Bork P."/>
            <person name="Suyama M."/>
            <person name="Torrents D."/>
            <person name="Alexandersson M."/>
            <person name="Trask B.J."/>
            <person name="Young J.M."/>
            <person name="Huang H."/>
            <person name="Wang H."/>
            <person name="Xing H."/>
            <person name="Daniels S."/>
            <person name="Gietzen D."/>
            <person name="Schmidt J."/>
            <person name="Stevens K."/>
            <person name="Vitt U."/>
            <person name="Wingrove J."/>
            <person name="Camara F."/>
            <person name="Mar Alba M."/>
            <person name="Abril J.F."/>
            <person name="Guigo R."/>
            <person name="Smit A."/>
            <person name="Dubchak I."/>
            <person name="Rubin E.M."/>
            <person name="Couronne O."/>
            <person name="Poliakov A."/>
            <person name="Huebner N."/>
            <person name="Ganten D."/>
            <person name="Goesele C."/>
            <person name="Hummel O."/>
            <person name="Kreitler T."/>
            <person name="Lee Y.-A."/>
            <person name="Monti J."/>
            <person name="Schulz H."/>
            <person name="Zimdahl H."/>
            <person name="Himmelbauer H."/>
            <person name="Lehrach H."/>
            <person name="Jacob H.J."/>
            <person name="Bromberg S."/>
            <person name="Gullings-Handley J."/>
            <person name="Jensen-Seaman M.I."/>
            <person name="Kwitek A.E."/>
            <person name="Lazar J."/>
            <person name="Pasko D."/>
            <person name="Tonellato P.J."/>
            <person name="Twigger S."/>
            <person name="Ponting C.P."/>
            <person name="Duarte J.M."/>
            <person name="Rice S."/>
            <person name="Goodstadt L."/>
            <person name="Beatson S.A."/>
            <person name="Emes R.D."/>
            <person name="Winter E.E."/>
            <person name="Webber C."/>
            <person name="Brandt P."/>
            <person name="Nyakatura G."/>
            <person name="Adetobi M."/>
            <person name="Chiaromonte F."/>
            <person name="Elnitski L."/>
            <person name="Eswara P."/>
            <person name="Hardison R.C."/>
            <person name="Hou M."/>
            <person name="Kolbe D."/>
            <person name="Makova K."/>
            <person name="Miller W."/>
            <person name="Nekrutenko A."/>
            <person name="Riemer C."/>
            <person name="Schwartz S."/>
            <person name="Taylor J."/>
            <person name="Yang S."/>
            <person name="Zhang Y."/>
            <person name="Lindpaintner K."/>
            <person name="Andrews T.D."/>
            <person name="Caccamo M."/>
            <person name="Clamp M."/>
            <person name="Clarke L."/>
            <person name="Curwen V."/>
            <person name="Durbin R.M."/>
            <person name="Eyras E."/>
            <person name="Searle S.M."/>
            <person name="Cooper G.M."/>
            <person name="Batzoglou S."/>
            <person name="Brudno M."/>
            <person name="Sidow A."/>
            <person name="Stone E.A."/>
            <person name="Payseur B.A."/>
            <person name="Bourque G."/>
            <person name="Lopez-Otin C."/>
            <person name="Puente X.S."/>
            <person name="Chakrabarti K."/>
            <person name="Chatterji S."/>
            <person name="Dewey C."/>
            <person name="Pachter L."/>
            <person name="Bray N."/>
            <person name="Yap V.B."/>
            <person name="Caspi A."/>
            <person name="Tesler G."/>
            <person name="Pevzner P.A."/>
            <person name="Haussler D."/>
            <person name="Roskin K.M."/>
            <person name="Baertsch R."/>
            <person name="Clawson H."/>
            <person name="Furey T.S."/>
            <person name="Hinrichs A.S."/>
            <person name="Karolchik D."/>
            <person name="Kent W.J."/>
            <person name="Rosenbloom K.R."/>
            <person name="Trumbower H."/>
            <person name="Weirauch M."/>
            <person name="Cooper D.N."/>
            <person name="Stenson P.D."/>
            <person name="Ma B."/>
            <person name="Brent M."/>
            <person name="Arumugam M."/>
            <person name="Shteynberg D."/>
            <person name="Copley R.R."/>
            <person name="Taylor M.S."/>
            <person name="Riethman H."/>
            <person name="Mudunuri U."/>
            <person name="Peterson J."/>
            <person name="Guyer M."/>
            <person name="Felsenfeld A."/>
            <person name="Old S."/>
            <person name="Mockrin S."/>
            <person name="Collins F.S."/>
        </authorList>
    </citation>
    <scope>NUCLEOTIDE SEQUENCE [LARGE SCALE GENOMIC DNA]</scope>
    <source>
        <strain>Brown Norway</strain>
    </source>
</reference>
<reference key="3">
    <citation type="submission" date="2005-07" db="EMBL/GenBank/DDBJ databases">
        <authorList>
            <person name="Mural R.J."/>
            <person name="Li P.W."/>
            <person name="Adams M.D."/>
            <person name="Amanatides P.G."/>
            <person name="Baden-Tillson H."/>
            <person name="Barnstead M."/>
            <person name="Chin S.H."/>
            <person name="Dew I."/>
            <person name="Evans C.A."/>
            <person name="Ferriera S."/>
            <person name="Flanigan M."/>
            <person name="Fosler C."/>
            <person name="Glodek A."/>
            <person name="Gu Z."/>
            <person name="Holt R.A."/>
            <person name="Jennings D."/>
            <person name="Kraft C.L."/>
            <person name="Lu F."/>
            <person name="Nguyen T."/>
            <person name="Nusskern D.R."/>
            <person name="Pfannkoch C.M."/>
            <person name="Sitter C."/>
            <person name="Sutton G.G."/>
            <person name="Venter J.C."/>
            <person name="Wang Z."/>
            <person name="Woodage T."/>
            <person name="Zheng X.H."/>
            <person name="Zhong F."/>
        </authorList>
    </citation>
    <scope>NUCLEOTIDE SEQUENCE [LARGE SCALE GENOMIC DNA]</scope>
</reference>
<gene>
    <name evidence="4" type="primary">Pgcka1</name>
</gene>
<evidence type="ECO:0000250" key="1">
    <source>
        <dbReference type="UniProtKB" id="Q8IY42"/>
    </source>
</evidence>
<evidence type="ECO:0000250" key="2">
    <source>
        <dbReference type="UniProtKB" id="Q99K99"/>
    </source>
</evidence>
<evidence type="ECO:0000256" key="3">
    <source>
        <dbReference type="SAM" id="MobiDB-lite"/>
    </source>
</evidence>
<evidence type="ECO:0000312" key="4">
    <source>
        <dbReference type="RGD" id="1561612"/>
    </source>
</evidence>
<protein>
    <recommendedName>
        <fullName>PDCD10 and GCKIII kinases-associated protein 1</fullName>
    </recommendedName>
</protein>
<name>PGKA1_RAT</name>
<sequence length="313" mass="33838">MGCRCCKMIQSYLFDPVQVPSPGFVNEVNNCKLEEDDTVRLKGTQNSEVEVPGSTLHSGSLSKPDSSGSTTGLPCQGSLTQEDSEERPCVEKHGIVNGIRPTATLQSVRSPRPQQVDSVSWASSPWVATIDSAHPAQPFLEGEDYRKQSCMLPTLEGTQMVGHGDSRAPAEALAVADHIPYIPAPDYPQVWSPEVDNVNPEEKDCLFENHSEVEPLPGIHPRVSQQGLSMPFSLKRSWDSLNEAGTTEVLSVYFKEEDPTQPTPVADPGNEREDPHTYNGNKEGAVVDEDAEVAEALAALEAATAGEDADDAD</sequence>
<comment type="function">
    <text evidence="1">Acts as a tumor suppressor. Acts as a tumor suppressor for colorectal cancer cell proliferation by targeting KEAP1/USP17/ELK1/CDK6 axis.</text>
</comment>
<comment type="subunit">
    <text evidence="1">Interacts with KEAP1; this interaction prevents the ubiquitination of KEAP1 by TRIM25, thus protecting KEAP1 from degradation. Found in association with PDCD10 and members of the STE20 kinases, such as STK24, STK25, and STK26.</text>
</comment>
<comment type="subcellular location">
    <subcellularLocation>
        <location evidence="1">Cell membrane</location>
        <topology evidence="1">Peripheral membrane protein</topology>
    </subcellularLocation>
</comment>
<feature type="chain" id="PRO_0000286563" description="PDCD10 and GCKIII kinases-associated protein 1">
    <location>
        <begin position="1"/>
        <end position="313"/>
    </location>
</feature>
<feature type="region of interest" description="Disordered" evidence="3">
    <location>
        <begin position="42"/>
        <end position="95"/>
    </location>
</feature>
<feature type="region of interest" description="Disordered" evidence="3">
    <location>
        <begin position="253"/>
        <end position="288"/>
    </location>
</feature>
<feature type="compositionally biased region" description="Low complexity" evidence="3">
    <location>
        <begin position="58"/>
        <end position="69"/>
    </location>
</feature>
<feature type="compositionally biased region" description="Polar residues" evidence="3">
    <location>
        <begin position="70"/>
        <end position="81"/>
    </location>
</feature>
<feature type="modified residue" description="Phosphoserine" evidence="2">
    <location>
        <position position="60"/>
    </location>
</feature>
<feature type="modified residue" description="Phosphothreonine" evidence="2">
    <location>
        <position position="104"/>
    </location>
</feature>
<feature type="modified residue" description="Phosphoserine" evidence="2">
    <location>
        <position position="107"/>
    </location>
</feature>
<feature type="modified residue" description="Phosphoserine" evidence="1">
    <location>
        <position position="237"/>
    </location>
</feature>
<feature type="modified residue" description="Phosphoserine" evidence="2">
    <location>
        <position position="240"/>
    </location>
</feature>
<organism>
    <name type="scientific">Rattus norvegicus</name>
    <name type="common">Rat</name>
    <dbReference type="NCBI Taxonomy" id="10116"/>
    <lineage>
        <taxon>Eukaryota</taxon>
        <taxon>Metazoa</taxon>
        <taxon>Chordata</taxon>
        <taxon>Craniata</taxon>
        <taxon>Vertebrata</taxon>
        <taxon>Euteleostomi</taxon>
        <taxon>Mammalia</taxon>
        <taxon>Eutheria</taxon>
        <taxon>Euarchontoglires</taxon>
        <taxon>Glires</taxon>
        <taxon>Rodentia</taxon>
        <taxon>Myomorpha</taxon>
        <taxon>Muroidea</taxon>
        <taxon>Muridae</taxon>
        <taxon>Murinae</taxon>
        <taxon>Rattus</taxon>
    </lineage>
</organism>